<evidence type="ECO:0000250" key="1"/>
<evidence type="ECO:0000250" key="2">
    <source>
        <dbReference type="UniProtKB" id="Q9NPC4"/>
    </source>
</evidence>
<evidence type="ECO:0000255" key="3"/>
<evidence type="ECO:0000269" key="4">
    <source>
    </source>
</evidence>
<evidence type="ECO:0000305" key="5"/>
<evidence type="ECO:0000305" key="6">
    <source>
    </source>
</evidence>
<evidence type="ECO:0000312" key="7">
    <source>
        <dbReference type="EMBL" id="AAF82758.1"/>
    </source>
</evidence>
<evidence type="ECO:0000312" key="8">
    <source>
        <dbReference type="RGD" id="621583"/>
    </source>
</evidence>
<gene>
    <name evidence="8" type="primary">A4galt</name>
</gene>
<keyword id="KW-0325">Glycoprotein</keyword>
<keyword id="KW-0328">Glycosyltransferase</keyword>
<keyword id="KW-0333">Golgi apparatus</keyword>
<keyword id="KW-0444">Lipid biosynthesis</keyword>
<keyword id="KW-0443">Lipid metabolism</keyword>
<keyword id="KW-0472">Membrane</keyword>
<keyword id="KW-1185">Reference proteome</keyword>
<keyword id="KW-0735">Signal-anchor</keyword>
<keyword id="KW-0808">Transferase</keyword>
<keyword id="KW-0812">Transmembrane</keyword>
<keyword id="KW-1133">Transmembrane helix</keyword>
<organism>
    <name type="scientific">Rattus norvegicus</name>
    <name type="common">Rat</name>
    <dbReference type="NCBI Taxonomy" id="10116"/>
    <lineage>
        <taxon>Eukaryota</taxon>
        <taxon>Metazoa</taxon>
        <taxon>Chordata</taxon>
        <taxon>Craniata</taxon>
        <taxon>Vertebrata</taxon>
        <taxon>Euteleostomi</taxon>
        <taxon>Mammalia</taxon>
        <taxon>Eutheria</taxon>
        <taxon>Euarchontoglires</taxon>
        <taxon>Glires</taxon>
        <taxon>Rodentia</taxon>
        <taxon>Myomorpha</taxon>
        <taxon>Muroidea</taxon>
        <taxon>Muridae</taxon>
        <taxon>Murinae</taxon>
        <taxon>Rattus</taxon>
    </lineage>
</organism>
<reference evidence="5 7" key="1">
    <citation type="journal article" date="2000" name="J. Biol. Chem.">
        <title>Cloning of Gb3 synthase, the key enzyme in globo-series glycosphingolipid synthesis, predicts a family of alpha1,4-glycosyltransferases conserved in plants, insects and mammals.</title>
        <authorList>
            <person name="Keusch J.J."/>
            <person name="Manzella S.M."/>
            <person name="Nyame K.A."/>
            <person name="Cummings R.D."/>
            <person name="Baenziger J.U."/>
        </authorList>
    </citation>
    <scope>NUCLEOTIDE SEQUENCE [MRNA]</scope>
    <scope>FUNCTION</scope>
    <scope>CATALYTIC ACTIVITY</scope>
    <scope>PATHWAY</scope>
    <scope>TISSUE SPECIFICITY</scope>
    <scope>MUTAGENESIS OF 199-ASP--ASP-201</scope>
    <source>
        <strain evidence="7">Sprague-Dawley</strain>
        <tissue evidence="7">Placenta</tissue>
    </source>
</reference>
<reference key="2">
    <citation type="journal article" date="2004" name="Genome Res.">
        <title>The status, quality, and expansion of the NIH full-length cDNA project: the Mammalian Gene Collection (MGC).</title>
        <authorList>
            <consortium name="The MGC Project Team"/>
        </authorList>
    </citation>
    <scope>NUCLEOTIDE SEQUENCE [LARGE SCALE MRNA]</scope>
    <source>
        <tissue>Placenta</tissue>
    </source>
</reference>
<protein>
    <recommendedName>
        <fullName>Lactosylceramide 4-alpha-galactosyltransferase</fullName>
        <ecNumber evidence="4">2.4.1.228</ecNumber>
    </recommendedName>
    <alternativeName>
        <fullName>Alpha-1,4-N-acetylglucosaminyltransferase</fullName>
    </alternativeName>
    <alternativeName>
        <fullName>Alpha-1,4-galactosyltransferase</fullName>
    </alternativeName>
    <alternativeName>
        <fullName>Alpha4Gal-T1</fullName>
    </alternativeName>
    <alternativeName>
        <fullName>Globotriaosylceramide synthase</fullName>
        <shortName>Gb3 synthase</shortName>
    </alternativeName>
    <alternativeName>
        <fullName>UDP-galactose:beta-D-galactosyl-beta1-R 4-alpha-D-galactosyltransferase</fullName>
    </alternativeName>
</protein>
<dbReference type="EC" id="2.4.1.228" evidence="4"/>
<dbReference type="EMBL" id="AF248544">
    <property type="protein sequence ID" value="AAF82758.1"/>
    <property type="molecule type" value="mRNA"/>
</dbReference>
<dbReference type="EMBL" id="BC097323">
    <property type="protein sequence ID" value="AAH97323.1"/>
    <property type="molecule type" value="mRNA"/>
</dbReference>
<dbReference type="RefSeq" id="NP_071576.1">
    <property type="nucleotide sequence ID" value="NM_022240.2"/>
</dbReference>
<dbReference type="RefSeq" id="XP_006242179.1">
    <property type="nucleotide sequence ID" value="XM_006242117.5"/>
</dbReference>
<dbReference type="RefSeq" id="XP_006242180.1">
    <property type="nucleotide sequence ID" value="XM_006242118.5"/>
</dbReference>
<dbReference type="RefSeq" id="XP_017450568.1">
    <property type="nucleotide sequence ID" value="XM_017595079.1"/>
</dbReference>
<dbReference type="RefSeq" id="XP_017450569.1">
    <property type="nucleotide sequence ID" value="XM_017595080.1"/>
</dbReference>
<dbReference type="RefSeq" id="XP_017450570.1">
    <property type="nucleotide sequence ID" value="XM_017595081.3"/>
</dbReference>
<dbReference type="FunCoup" id="Q9JI93">
    <property type="interactions" value="83"/>
</dbReference>
<dbReference type="STRING" id="10116.ENSRNOP00000064362"/>
<dbReference type="SwissLipids" id="SLP:000000761"/>
<dbReference type="SwissLipids" id="SLP:000000762"/>
<dbReference type="CAZy" id="GT32">
    <property type="family name" value="Glycosyltransferase Family 32"/>
</dbReference>
<dbReference type="GlyCosmos" id="Q9JI93">
    <property type="glycosylation" value="2 sites, No reported glycans"/>
</dbReference>
<dbReference type="GlyGen" id="Q9JI93">
    <property type="glycosylation" value="2 sites"/>
</dbReference>
<dbReference type="PhosphoSitePlus" id="Q9JI93"/>
<dbReference type="jPOST" id="Q9JI93"/>
<dbReference type="PaxDb" id="10116-ENSRNOP00000064362"/>
<dbReference type="Ensembl" id="ENSRNOT00000012914.6">
    <property type="protein sequence ID" value="ENSRNOP00000064362.1"/>
    <property type="gene ID" value="ENSRNOG00000009736.6"/>
</dbReference>
<dbReference type="Ensembl" id="ENSRNOT00000096640.1">
    <property type="protein sequence ID" value="ENSRNOP00000095592.1"/>
    <property type="gene ID" value="ENSRNOG00000009736.6"/>
</dbReference>
<dbReference type="Ensembl" id="ENSRNOT00000104849.1">
    <property type="protein sequence ID" value="ENSRNOP00000084868.1"/>
    <property type="gene ID" value="ENSRNOG00000009736.6"/>
</dbReference>
<dbReference type="Ensembl" id="ENSRNOT00000108253.1">
    <property type="protein sequence ID" value="ENSRNOP00000081935.1"/>
    <property type="gene ID" value="ENSRNOG00000009736.6"/>
</dbReference>
<dbReference type="GeneID" id="63888"/>
<dbReference type="KEGG" id="rno:63888"/>
<dbReference type="UCSC" id="RGD:621583">
    <property type="organism name" value="rat"/>
</dbReference>
<dbReference type="AGR" id="RGD:621583"/>
<dbReference type="CTD" id="53947"/>
<dbReference type="RGD" id="621583">
    <property type="gene designation" value="A4galt"/>
</dbReference>
<dbReference type="eggNOG" id="KOG1928">
    <property type="taxonomic scope" value="Eukaryota"/>
</dbReference>
<dbReference type="GeneTree" id="ENSGT00510000047981"/>
<dbReference type="HOGENOM" id="CLU_049512_2_0_1"/>
<dbReference type="InParanoid" id="Q9JI93"/>
<dbReference type="OMA" id="CKDSYVV"/>
<dbReference type="OrthoDB" id="409543at2759"/>
<dbReference type="PhylomeDB" id="Q9JI93"/>
<dbReference type="Reactome" id="R-RNO-9840309">
    <property type="pathway name" value="Glycosphingolipid biosynthesis"/>
</dbReference>
<dbReference type="PRO" id="PR:Q9JI93"/>
<dbReference type="Proteomes" id="UP000002494">
    <property type="component" value="Chromosome 7"/>
</dbReference>
<dbReference type="Bgee" id="ENSRNOG00000009736">
    <property type="expression patterns" value="Expressed in jejunum and 12 other cell types or tissues"/>
</dbReference>
<dbReference type="GO" id="GO:0000139">
    <property type="term" value="C:Golgi membrane"/>
    <property type="evidence" value="ECO:0007669"/>
    <property type="project" value="UniProtKB-SubCell"/>
</dbReference>
<dbReference type="GO" id="GO:0016020">
    <property type="term" value="C:membrane"/>
    <property type="evidence" value="ECO:0000266"/>
    <property type="project" value="RGD"/>
</dbReference>
<dbReference type="GO" id="GO:0008378">
    <property type="term" value="F:galactosyltransferase activity"/>
    <property type="evidence" value="ECO:0000314"/>
    <property type="project" value="RGD"/>
</dbReference>
<dbReference type="GO" id="GO:0050512">
    <property type="term" value="F:lactosylceramide 4-alpha-galactosyltransferase activity"/>
    <property type="evidence" value="ECO:0000266"/>
    <property type="project" value="RGD"/>
</dbReference>
<dbReference type="GO" id="GO:0015643">
    <property type="term" value="F:toxic substance binding"/>
    <property type="evidence" value="ECO:0000266"/>
    <property type="project" value="RGD"/>
</dbReference>
<dbReference type="GO" id="GO:0001576">
    <property type="term" value="P:globoside biosynthetic process"/>
    <property type="evidence" value="ECO:0000266"/>
    <property type="project" value="RGD"/>
</dbReference>
<dbReference type="GO" id="GO:0006688">
    <property type="term" value="P:glycosphingolipid biosynthetic process"/>
    <property type="evidence" value="ECO:0000318"/>
    <property type="project" value="GO_Central"/>
</dbReference>
<dbReference type="GO" id="GO:0007009">
    <property type="term" value="P:plasma membrane organization"/>
    <property type="evidence" value="ECO:0000266"/>
    <property type="project" value="RGD"/>
</dbReference>
<dbReference type="FunFam" id="3.90.550.20:FF:000003">
    <property type="entry name" value="Lactosylceramide 4-alpha-galactosyltransferase"/>
    <property type="match status" value="1"/>
</dbReference>
<dbReference type="Gene3D" id="3.90.550.20">
    <property type="match status" value="1"/>
</dbReference>
<dbReference type="InterPro" id="IPR007652">
    <property type="entry name" value="A1-4-GlycosylTfrase_dom"/>
</dbReference>
<dbReference type="InterPro" id="IPR051981">
    <property type="entry name" value="Glycosyltransf_32"/>
</dbReference>
<dbReference type="InterPro" id="IPR007577">
    <property type="entry name" value="GlycoTrfase_DXD_sugar-bd_CS"/>
</dbReference>
<dbReference type="InterPro" id="IPR029044">
    <property type="entry name" value="Nucleotide-diphossugar_trans"/>
</dbReference>
<dbReference type="PANTHER" id="PTHR12042:SF17">
    <property type="entry name" value="LACTOSYLCERAMIDE 4-ALPHA-GALACTOSYLTRANSFERASE"/>
    <property type="match status" value="1"/>
</dbReference>
<dbReference type="PANTHER" id="PTHR12042">
    <property type="entry name" value="LACTOSYLCERAMIDE 4-ALPHA-GALACTOSYLTRANSFERASE ALPHA- 1,4-GALACTOSYLTRANSFERASE"/>
    <property type="match status" value="1"/>
</dbReference>
<dbReference type="Pfam" id="PF04572">
    <property type="entry name" value="Gb3_synth"/>
    <property type="match status" value="1"/>
</dbReference>
<dbReference type="Pfam" id="PF04488">
    <property type="entry name" value="Gly_transf_sug"/>
    <property type="match status" value="1"/>
</dbReference>
<dbReference type="SUPFAM" id="SSF53448">
    <property type="entry name" value="Nucleotide-diphospho-sugar transferases"/>
    <property type="match status" value="1"/>
</dbReference>
<accession>Q9JI93</accession>
<accession>Q4QR98</accession>
<name>A4GAT_RAT</name>
<sequence>MGISRSDLEETMSKPPDCLPRMLRGTPRQRVFTLFIISFKFTFLVSILIYWHTVGAPKDQRRQYSLPVDFPCPQLAFPRVSAPGNIFFLETSDRTNPSFLFMCSVESAARAHPESQVVVLMKGLPRDTTAWPRNLGISLLSCFPNVQIRPLDLQELFEDTPLAAWYLEAQHRWEPYLLPVLSDASRIALLWKFGGIYLDTDFIVLKNLRNLTNMLGIQSRYVLNGAFLAFERKHEFLALCIRDFVAHYNGWIWGHQGPQLLTRVFKKWCSIHSLKESRACRGVTALPPEAFYPIPWQNWKKYFEDVSPEELAQLLNATYAVHVWNKKSQGTHLEATSRALLAQLHARYCPTTHRAMTMYL</sequence>
<comment type="function">
    <text evidence="2 4">Catalyzes the transfer of galactose from UDP-alpha-D-galactose to lactosylceramide/beta-D-galactosyl-(1-&gt;4)-beta-D-glucosyl-(1&lt;-&gt;1)-ceramide(d18:1(4E)) to produce globotriaosylceramide/globoside Gb3Cer (d18:1(4E)) (PubMed:10854428). Also able to transfer galactose to galactosylceramide/beta-D-Gal-(1&lt;-&gt;1')-Cer (By similarity). Globoside Gb3Cer is a glycosphingolipid of the globo serie, one of the major types of neutral root structures of glycosphingolipids, that constitute a significant portion of mammalian cell membranes (By similarity).</text>
</comment>
<comment type="catalytic activity">
    <reaction evidence="4">
        <text>a beta-D-Gal-(1-&gt;4)-beta-D-Glc-(1&lt;-&gt;1)-Cer(d18:1(4E)) + UDP-alpha-D-galactose = a globoside Gb3Cer (d18:1(4E)) + UDP + H(+)</text>
        <dbReference type="Rhea" id="RHEA:11924"/>
        <dbReference type="ChEBI" id="CHEBI:15378"/>
        <dbReference type="ChEBI" id="CHEBI:17950"/>
        <dbReference type="ChEBI" id="CHEBI:18313"/>
        <dbReference type="ChEBI" id="CHEBI:58223"/>
        <dbReference type="ChEBI" id="CHEBI:66914"/>
        <dbReference type="EC" id="2.4.1.228"/>
    </reaction>
    <physiologicalReaction direction="left-to-right" evidence="6">
        <dbReference type="Rhea" id="RHEA:11925"/>
    </physiologicalReaction>
</comment>
<comment type="catalytic activity">
    <reaction evidence="2">
        <text>a beta-D-Gal-(1&lt;-&gt;1')-ceramide + UDP-alpha-D-galactose = alpha-D-Gal-(1-&gt;4)-beta-D-Gal-(1&lt;-&gt;1')-Cer + UDP + H(+)</text>
        <dbReference type="Rhea" id="RHEA:60044"/>
        <dbReference type="ChEBI" id="CHEBI:15378"/>
        <dbReference type="ChEBI" id="CHEBI:58223"/>
        <dbReference type="ChEBI" id="CHEBI:66914"/>
        <dbReference type="ChEBI" id="CHEBI:143593"/>
        <dbReference type="ChEBI" id="CHEBI:143594"/>
    </reaction>
    <physiologicalReaction direction="left-to-right" evidence="2">
        <dbReference type="Rhea" id="RHEA:60045"/>
    </physiologicalReaction>
</comment>
<comment type="pathway">
    <text evidence="6">Glycolipid biosynthesis.</text>
</comment>
<comment type="subcellular location">
    <subcellularLocation>
        <location evidence="1">Golgi apparatus membrane</location>
        <topology evidence="1">Single-pass type II membrane protein</topology>
    </subcellularLocation>
</comment>
<comment type="tissue specificity">
    <text evidence="4">Ubiquitous. Highly expressed in kidney, mesenteric lymph node, spleen and brain.</text>
</comment>
<comment type="domain">
    <text evidence="4">The conserved DXD motif is involved in enzyme activity.</text>
</comment>
<comment type="similarity">
    <text evidence="5">Belongs to the glycosyltransferase 32 family.</text>
</comment>
<proteinExistence type="evidence at protein level"/>
<feature type="chain" id="PRO_0000080582" description="Lactosylceramide 4-alpha-galactosyltransferase">
    <location>
        <begin position="1"/>
        <end position="360"/>
    </location>
</feature>
<feature type="topological domain" description="Cytoplasmic" evidence="3">
    <location>
        <begin position="1"/>
        <end position="30"/>
    </location>
</feature>
<feature type="transmembrane region" description="Helical; Signal-anchor for type II membrane protein" evidence="3">
    <location>
        <begin position="31"/>
        <end position="51"/>
    </location>
</feature>
<feature type="topological domain" description="Lumenal" evidence="3">
    <location>
        <begin position="52"/>
        <end position="360"/>
    </location>
</feature>
<feature type="short sequence motif" description="DXD motif">
    <location>
        <begin position="199"/>
        <end position="201"/>
    </location>
</feature>
<feature type="glycosylation site" description="N-linked (GlcNAc...) asparagine" evidence="3">
    <location>
        <position position="210"/>
    </location>
</feature>
<feature type="glycosylation site" description="N-linked (GlcNAc...) asparagine" evidence="3">
    <location>
        <position position="316"/>
    </location>
</feature>
<feature type="mutagenesis site" description="Loss of activity." evidence="4">
    <original>DTD</original>
    <variation>ATA</variation>
    <location>
        <begin position="199"/>
        <end position="201"/>
    </location>
</feature>